<protein>
    <recommendedName>
        <fullName>Zinc finger protein 14</fullName>
    </recommendedName>
</protein>
<keyword id="KW-0238">DNA-binding</keyword>
<keyword id="KW-0479">Metal-binding</keyword>
<keyword id="KW-0539">Nucleus</keyword>
<keyword id="KW-1185">Reference proteome</keyword>
<keyword id="KW-0677">Repeat</keyword>
<keyword id="KW-0804">Transcription</keyword>
<keyword id="KW-0805">Transcription regulation</keyword>
<keyword id="KW-0862">Zinc</keyword>
<keyword id="KW-0863">Zinc-finger</keyword>
<evidence type="ECO:0000255" key="1">
    <source>
        <dbReference type="PROSITE-ProRule" id="PRU00042"/>
    </source>
</evidence>
<evidence type="ECO:0000255" key="2">
    <source>
        <dbReference type="PROSITE-ProRule" id="PRU00119"/>
    </source>
</evidence>
<evidence type="ECO:0000256" key="3">
    <source>
        <dbReference type="SAM" id="MobiDB-lite"/>
    </source>
</evidence>
<evidence type="ECO:0000305" key="4"/>
<dbReference type="EMBL" id="AB178987">
    <property type="protein sequence ID" value="BAE02038.1"/>
    <property type="molecule type" value="mRNA"/>
</dbReference>
<dbReference type="RefSeq" id="NP_001306568.1">
    <property type="nucleotide sequence ID" value="NM_001319639.1"/>
</dbReference>
<dbReference type="SMR" id="Q4R4C7"/>
<dbReference type="eggNOG" id="KOG1721">
    <property type="taxonomic scope" value="Eukaryota"/>
</dbReference>
<dbReference type="Proteomes" id="UP000233100">
    <property type="component" value="Unplaced"/>
</dbReference>
<dbReference type="GO" id="GO:0005634">
    <property type="term" value="C:nucleus"/>
    <property type="evidence" value="ECO:0007669"/>
    <property type="project" value="UniProtKB-SubCell"/>
</dbReference>
<dbReference type="GO" id="GO:0003677">
    <property type="term" value="F:DNA binding"/>
    <property type="evidence" value="ECO:0007669"/>
    <property type="project" value="UniProtKB-KW"/>
</dbReference>
<dbReference type="GO" id="GO:0008270">
    <property type="term" value="F:zinc ion binding"/>
    <property type="evidence" value="ECO:0007669"/>
    <property type="project" value="UniProtKB-KW"/>
</dbReference>
<dbReference type="GO" id="GO:0006355">
    <property type="term" value="P:regulation of DNA-templated transcription"/>
    <property type="evidence" value="ECO:0007669"/>
    <property type="project" value="InterPro"/>
</dbReference>
<dbReference type="CDD" id="cd07765">
    <property type="entry name" value="KRAB_A-box"/>
    <property type="match status" value="1"/>
</dbReference>
<dbReference type="FunFam" id="3.30.160.60:FF:000100">
    <property type="entry name" value="Zinc finger 45-like"/>
    <property type="match status" value="1"/>
</dbReference>
<dbReference type="FunFam" id="3.30.160.60:FF:000838">
    <property type="entry name" value="Zinc finger protein 14"/>
    <property type="match status" value="4"/>
</dbReference>
<dbReference type="FunFam" id="3.30.160.60:FF:001223">
    <property type="entry name" value="Zinc finger protein 14"/>
    <property type="match status" value="3"/>
</dbReference>
<dbReference type="FunFam" id="3.30.160.60:FF:000184">
    <property type="entry name" value="Zinc finger protein 333"/>
    <property type="match status" value="2"/>
</dbReference>
<dbReference type="FunFam" id="3.30.160.60:FF:001602">
    <property type="entry name" value="Zinc finger protein 490"/>
    <property type="match status" value="1"/>
</dbReference>
<dbReference type="FunFam" id="3.30.160.60:FF:002254">
    <property type="entry name" value="Zinc finger protein 540"/>
    <property type="match status" value="3"/>
</dbReference>
<dbReference type="FunFam" id="3.30.160.60:FF:000371">
    <property type="entry name" value="Zinc finger protein 555"/>
    <property type="match status" value="1"/>
</dbReference>
<dbReference type="FunFam" id="3.30.160.60:FF:000156">
    <property type="entry name" value="Zinc finger protein 568"/>
    <property type="match status" value="2"/>
</dbReference>
<dbReference type="FunFam" id="3.30.160.60:FF:000271">
    <property type="entry name" value="Zinc finger protein 662"/>
    <property type="match status" value="1"/>
</dbReference>
<dbReference type="Gene3D" id="6.10.140.140">
    <property type="match status" value="1"/>
</dbReference>
<dbReference type="Gene3D" id="3.30.160.60">
    <property type="entry name" value="Classic Zinc Finger"/>
    <property type="match status" value="18"/>
</dbReference>
<dbReference type="InterPro" id="IPR001909">
    <property type="entry name" value="KRAB"/>
</dbReference>
<dbReference type="InterPro" id="IPR036051">
    <property type="entry name" value="KRAB_dom_sf"/>
</dbReference>
<dbReference type="InterPro" id="IPR050758">
    <property type="entry name" value="Znf_C2H2-type"/>
</dbReference>
<dbReference type="InterPro" id="IPR036236">
    <property type="entry name" value="Znf_C2H2_sf"/>
</dbReference>
<dbReference type="InterPro" id="IPR013087">
    <property type="entry name" value="Znf_C2H2_type"/>
</dbReference>
<dbReference type="PANTHER" id="PTHR23234:SF10">
    <property type="entry name" value="RIKEN CDNA 6720489N17 GENE-RELATED"/>
    <property type="match status" value="1"/>
</dbReference>
<dbReference type="PANTHER" id="PTHR23234">
    <property type="entry name" value="ZNF44 PROTEIN"/>
    <property type="match status" value="1"/>
</dbReference>
<dbReference type="Pfam" id="PF01352">
    <property type="entry name" value="KRAB"/>
    <property type="match status" value="1"/>
</dbReference>
<dbReference type="Pfam" id="PF00096">
    <property type="entry name" value="zf-C2H2"/>
    <property type="match status" value="14"/>
</dbReference>
<dbReference type="Pfam" id="PF13894">
    <property type="entry name" value="zf-C2H2_4"/>
    <property type="match status" value="1"/>
</dbReference>
<dbReference type="Pfam" id="PF13912">
    <property type="entry name" value="zf-C2H2_6"/>
    <property type="match status" value="1"/>
</dbReference>
<dbReference type="SMART" id="SM00349">
    <property type="entry name" value="KRAB"/>
    <property type="match status" value="1"/>
</dbReference>
<dbReference type="SMART" id="SM00355">
    <property type="entry name" value="ZnF_C2H2"/>
    <property type="match status" value="18"/>
</dbReference>
<dbReference type="SUPFAM" id="SSF57667">
    <property type="entry name" value="beta-beta-alpha zinc fingers"/>
    <property type="match status" value="10"/>
</dbReference>
<dbReference type="SUPFAM" id="SSF109640">
    <property type="entry name" value="KRAB domain (Kruppel-associated box)"/>
    <property type="match status" value="1"/>
</dbReference>
<dbReference type="PROSITE" id="PS50805">
    <property type="entry name" value="KRAB"/>
    <property type="match status" value="1"/>
</dbReference>
<dbReference type="PROSITE" id="PS00028">
    <property type="entry name" value="ZINC_FINGER_C2H2_1"/>
    <property type="match status" value="17"/>
</dbReference>
<dbReference type="PROSITE" id="PS50157">
    <property type="entry name" value="ZINC_FINGER_C2H2_2"/>
    <property type="match status" value="19"/>
</dbReference>
<comment type="function">
    <text>May be involved in transcriptional regulation.</text>
</comment>
<comment type="subcellular location">
    <subcellularLocation>
        <location evidence="4">Nucleus</location>
    </subcellularLocation>
</comment>
<comment type="similarity">
    <text evidence="4">Belongs to the krueppel C2H2-type zinc-finger protein family.</text>
</comment>
<feature type="chain" id="PRO_0000230310" description="Zinc finger protein 14">
    <location>
        <begin position="1"/>
        <end position="642"/>
    </location>
</feature>
<feature type="domain" description="KRAB" evidence="2">
    <location>
        <begin position="4"/>
        <end position="76"/>
    </location>
</feature>
<feature type="zinc finger region" description="C2H2-type 1" evidence="1">
    <location>
        <begin position="103"/>
        <end position="125"/>
    </location>
</feature>
<feature type="zinc finger region" description="C2H2-type 2; degenerate" evidence="1">
    <location>
        <begin position="141"/>
        <end position="163"/>
    </location>
</feature>
<feature type="zinc finger region" description="C2H2-type 3" evidence="1">
    <location>
        <begin position="169"/>
        <end position="191"/>
    </location>
</feature>
<feature type="zinc finger region" description="C2H2-type 4; atypical" evidence="1">
    <location>
        <begin position="197"/>
        <end position="217"/>
    </location>
</feature>
<feature type="zinc finger region" description="C2H2-type 5" evidence="1">
    <location>
        <begin position="223"/>
        <end position="245"/>
    </location>
</feature>
<feature type="zinc finger region" description="C2H2-type 6" evidence="1">
    <location>
        <begin position="251"/>
        <end position="273"/>
    </location>
</feature>
<feature type="zinc finger region" description="C2H2-type 7" evidence="1">
    <location>
        <begin position="279"/>
        <end position="301"/>
    </location>
</feature>
<feature type="zinc finger region" description="C2H2-type 8" evidence="1">
    <location>
        <begin position="307"/>
        <end position="329"/>
    </location>
</feature>
<feature type="zinc finger region" description="C2H2-type 9" evidence="1">
    <location>
        <begin position="335"/>
        <end position="357"/>
    </location>
</feature>
<feature type="zinc finger region" description="C2H2-type 10" evidence="1">
    <location>
        <begin position="363"/>
        <end position="385"/>
    </location>
</feature>
<feature type="zinc finger region" description="C2H2-type 11" evidence="1">
    <location>
        <begin position="391"/>
        <end position="413"/>
    </location>
</feature>
<feature type="zinc finger region" description="C2H2-type 12" evidence="1">
    <location>
        <begin position="419"/>
        <end position="441"/>
    </location>
</feature>
<feature type="zinc finger region" description="C2H2-type 13" evidence="1">
    <location>
        <begin position="447"/>
        <end position="469"/>
    </location>
</feature>
<feature type="zinc finger region" description="C2H2-type 14" evidence="1">
    <location>
        <begin position="475"/>
        <end position="497"/>
    </location>
</feature>
<feature type="zinc finger region" description="C2H2-type 15" evidence="1">
    <location>
        <begin position="503"/>
        <end position="525"/>
    </location>
</feature>
<feature type="zinc finger region" description="C2H2-type 16" evidence="1">
    <location>
        <begin position="531"/>
        <end position="553"/>
    </location>
</feature>
<feature type="zinc finger region" description="C2H2-type 17" evidence="1">
    <location>
        <begin position="559"/>
        <end position="581"/>
    </location>
</feature>
<feature type="zinc finger region" description="C2H2-type 18" evidence="1">
    <location>
        <begin position="587"/>
        <end position="609"/>
    </location>
</feature>
<feature type="zinc finger region" description="C2H2-type 19" evidence="1">
    <location>
        <begin position="615"/>
        <end position="637"/>
    </location>
</feature>
<feature type="region of interest" description="Disordered" evidence="3">
    <location>
        <begin position="77"/>
        <end position="99"/>
    </location>
</feature>
<feature type="compositionally biased region" description="Polar residues" evidence="3">
    <location>
        <begin position="81"/>
        <end position="99"/>
    </location>
</feature>
<sequence length="642" mass="75234">MNSVSFEDVAVNFTLEEWALLDSSQKKLYEDVMQETFKNLVCLGKKWEDQDIEDDHRNQGRNRRGHMVERLCESRKGSKCGETTSQMPNVNINKETSTGAKPHECSFCGKDFMHHSSLNRHMRSHIGQKPNEYQEYEKQPCKRKAVGKTFSYRHCVRKHERTHTGGKPYECKQCGKAFIYYQPFQRHERIHAGEKPYECKQCGKTFIYYQSFQKHAHTGKKPYECKQCGKTFICYQSFQRHERTHTGEKPYECKQCGKAFSCPTYFRTHERTHTGEKPYKCKECGKAFSFLSSFRRHKRTHSGEKPYECKECGKAFFYSASFQAHVITHTGARPYKCKECGKAFNSSNSCRVHERTHIGEKPYECKRCGKSFSWSISLRMHERTHTGEKPYECKQCHKTFSFSSSLREHETTHTGEKPYECKQCGKAFRFSSSLQRHERTHSAEKPYECKQCGKAFRCSSYFRIHERSHTGEKPYECKQCGKVFIRSSSFRLHERTHTGEKPYECKLCGKAFSFSSSLREHEKIHTGNKPFECKRCGKAFLRSSQIRLHERTHTGEKPYQCKQCGKAFISSSKFRMHERTHTGEKPYRCKQCGKAFRFSSSVRIHERSHTGEKPYECKQCGKAFISSSHFRLHERTHMGEKA</sequence>
<organism>
    <name type="scientific">Macaca fascicularis</name>
    <name type="common">Crab-eating macaque</name>
    <name type="synonym">Cynomolgus monkey</name>
    <dbReference type="NCBI Taxonomy" id="9541"/>
    <lineage>
        <taxon>Eukaryota</taxon>
        <taxon>Metazoa</taxon>
        <taxon>Chordata</taxon>
        <taxon>Craniata</taxon>
        <taxon>Vertebrata</taxon>
        <taxon>Euteleostomi</taxon>
        <taxon>Mammalia</taxon>
        <taxon>Eutheria</taxon>
        <taxon>Euarchontoglires</taxon>
        <taxon>Primates</taxon>
        <taxon>Haplorrhini</taxon>
        <taxon>Catarrhini</taxon>
        <taxon>Cercopithecidae</taxon>
        <taxon>Cercopithecinae</taxon>
        <taxon>Macaca</taxon>
    </lineage>
</organism>
<gene>
    <name type="primary">ZNF14</name>
    <name type="ORF">QtsA-10968</name>
</gene>
<accession>Q4R4C7</accession>
<reference key="1">
    <citation type="submission" date="2005-06" db="EMBL/GenBank/DDBJ databases">
        <title>DNA sequences of macaque genes expressed in brain or testis and its evolutionary implications.</title>
        <authorList>
            <consortium name="International consortium for macaque cDNA sequencing and analysis"/>
        </authorList>
    </citation>
    <scope>NUCLEOTIDE SEQUENCE [LARGE SCALE MRNA]</scope>
    <source>
        <tissue>Testis</tissue>
    </source>
</reference>
<proteinExistence type="evidence at transcript level"/>
<name>ZNF14_MACFA</name>